<proteinExistence type="predicted"/>
<keyword id="KW-1185">Reference proteome</keyword>
<keyword id="KW-0946">Virion</keyword>
<name>Y567_ATV</name>
<sequence length="567" mass="61849">MEFFRFINALLGFPEEERKKKQSSGGTHNEHKPEQQTNAQHPSPQPIHHTPPSHSSETNNEHKPTPTPIRPAPPPPPPIIRHLKTHGSGSTTTHNEHESTPPSHYIRPMPIEHEPTPSPQPVTHNSSTNNEHESTPLPTPTPPNSGNEHKSTSAPTPPGLHRTPLPTPPIHHGIPTQIPPKREPEHHTHGSTNNEHESKRSPIPTPPGLHRIPTPTPPTHQTSPSHSSGGTHNEHESHPPTLHIPPSHHIRPMPIPPNPPIVREPTPTPQPTPIPTPPRLHRIPTPTPPRTPQPTPPPTHGSSSTNSSGSTNNEHKPTPKPIPIPPTPPPPPPHHGIPTQIPPKHESEHHDHGSSSTNSSSSTSNSSSGGTNNEHESTPSPQPMPIEHKPEQQTNAQNRITPIINLSQTKQKTTEKQTSCTIQNLEYAIQIGNLTQAKKILNNLSSNGQISQTKVNMANTVIEGLTKLKMQNQPISNVLSNLTNSFQQMYQNYIRTGKMPDNLIELANVINAITSLLPQYSASVPPNVKAEISRLTVLQQGGSTGTVPAVFFQATEEQRPVSNLIVQ</sequence>
<feature type="chain" id="PRO_0000389083" description="Structural protein ORF567">
    <location>
        <begin position="1"/>
        <end position="567"/>
    </location>
</feature>
<feature type="region of interest" description="Disordered" evidence="1">
    <location>
        <begin position="7"/>
        <end position="393"/>
    </location>
</feature>
<feature type="compositionally biased region" description="Pro residues" evidence="1">
    <location>
        <begin position="65"/>
        <end position="79"/>
    </location>
</feature>
<feature type="compositionally biased region" description="Basic and acidic residues" evidence="1">
    <location>
        <begin position="180"/>
        <end position="200"/>
    </location>
</feature>
<feature type="compositionally biased region" description="Low complexity" evidence="1">
    <location>
        <begin position="219"/>
        <end position="231"/>
    </location>
</feature>
<feature type="compositionally biased region" description="Pro residues" evidence="1">
    <location>
        <begin position="253"/>
        <end position="278"/>
    </location>
</feature>
<feature type="compositionally biased region" description="Pro residues" evidence="1">
    <location>
        <begin position="285"/>
        <end position="299"/>
    </location>
</feature>
<feature type="compositionally biased region" description="Low complexity" evidence="1">
    <location>
        <begin position="300"/>
        <end position="312"/>
    </location>
</feature>
<feature type="compositionally biased region" description="Pro residues" evidence="1">
    <location>
        <begin position="319"/>
        <end position="335"/>
    </location>
</feature>
<feature type="compositionally biased region" description="Basic and acidic residues" evidence="1">
    <location>
        <begin position="343"/>
        <end position="353"/>
    </location>
</feature>
<feature type="compositionally biased region" description="Low complexity" evidence="1">
    <location>
        <begin position="354"/>
        <end position="372"/>
    </location>
</feature>
<evidence type="ECO:0000256" key="1">
    <source>
        <dbReference type="SAM" id="MobiDB-lite"/>
    </source>
</evidence>
<comment type="subcellular location">
    <subcellularLocation>
        <location>Virion</location>
    </subcellularLocation>
</comment>
<reference key="1">
    <citation type="journal article" date="2005" name="Nature">
        <title>Virology: independent virus development outside a host.</title>
        <authorList>
            <person name="Haring M."/>
            <person name="Vestergaard G."/>
            <person name="Rachel R."/>
            <person name="Chen L."/>
            <person name="Garrett R.A."/>
            <person name="Prangishvili D."/>
        </authorList>
    </citation>
    <scope>NUCLEOTIDE SEQUENCE [GENOMIC DNA]</scope>
</reference>
<accession>Q3V4U7</accession>
<organism>
    <name type="scientific">Acidianus two-tailed virus</name>
    <name type="common">ATV</name>
    <dbReference type="NCBI Taxonomy" id="315953"/>
    <lineage>
        <taxon>Viruses</taxon>
        <taxon>Viruses incertae sedis</taxon>
        <taxon>Bicaudaviridae</taxon>
        <taxon>Bicaudavirus</taxon>
    </lineage>
</organism>
<dbReference type="EMBL" id="AJ888457">
    <property type="protein sequence ID" value="CAI59867.1"/>
    <property type="molecule type" value="Genomic_DNA"/>
</dbReference>
<dbReference type="RefSeq" id="YP_319880.1">
    <property type="nucleotide sequence ID" value="NC_007409.1"/>
</dbReference>
<dbReference type="SMR" id="Q3V4U7"/>
<dbReference type="GeneID" id="4484242"/>
<dbReference type="KEGG" id="vg:4484242"/>
<dbReference type="Proteomes" id="UP000002150">
    <property type="component" value="Genome"/>
</dbReference>
<dbReference type="GO" id="GO:0044423">
    <property type="term" value="C:virion component"/>
    <property type="evidence" value="ECO:0007669"/>
    <property type="project" value="UniProtKB-KW"/>
</dbReference>
<dbReference type="PRINTS" id="PR01217">
    <property type="entry name" value="PRICHEXTENSN"/>
</dbReference>
<protein>
    <recommendedName>
        <fullName>Structural protein ORF567</fullName>
    </recommendedName>
</protein>
<organismHost>
    <name type="scientific">Acidianus convivator</name>
    <dbReference type="NCBI Taxonomy" id="269667"/>
</organismHost>